<keyword id="KW-0046">Antibiotic resistance</keyword>
<keyword id="KW-0997">Cell inner membrane</keyword>
<keyword id="KW-1003">Cell membrane</keyword>
<keyword id="KW-0472">Membrane</keyword>
<keyword id="KW-1185">Reference proteome</keyword>
<keyword id="KW-0735">Signal-anchor</keyword>
<keyword id="KW-0812">Transmembrane</keyword>
<keyword id="KW-1133">Transmembrane helix</keyword>
<keyword id="KW-0813">Transport</keyword>
<evidence type="ECO:0000255" key="1"/>
<evidence type="ECO:0000269" key="2">
    <source>
    </source>
</evidence>
<evidence type="ECO:0000305" key="3"/>
<proteinExistence type="evidence at transcript level"/>
<accession>P32716</accession>
<accession>Q2M6M2</accession>
<sequence>MESTPKKAPRSKFPALLVVALALVALVFVIWRVDSAPSTNDAYASADTIDVVPEVSGRIVELAVTDNQAVKQGDLLFRIDPRPYEANLAKAEASLAALDKQIMLTQRSVDAQQFGADSVNATVEKARAAAKQATDTLRRTEPLLKEGFVSAEDVDRARTAQRAAEADLNAVLLQAQSAASAVSGVDALVAQRAAVEADIALTKLHLEMATVRAPFDGRVISLKTSVGQFASAMRPIFTLIDTRHWYVIANFRETDLKNIRSGTPATIRLMSDSGKTFEGKVDSIGYGVLPDDGGLVLGGLPKVSRSINWVRVAQRFPVKIMVDKPDPEMFRIGASAVANLEPQ</sequence>
<reference key="1">
    <citation type="journal article" date="1993" name="Nucleic Acids Res.">
        <title>Analysis of the Escherichia coli genome. IV. DNA sequence of the region from 89.2 to 92.8 minutes.</title>
        <authorList>
            <person name="Blattner F.R."/>
            <person name="Burland V.D."/>
            <person name="Plunkett G. III"/>
            <person name="Sofia H.J."/>
            <person name="Daniels D.L."/>
        </authorList>
    </citation>
    <scope>NUCLEOTIDE SEQUENCE [LARGE SCALE GENOMIC DNA]</scope>
    <source>
        <strain>K12 / MG1655 / ATCC 47076</strain>
    </source>
</reference>
<reference key="2">
    <citation type="journal article" date="1997" name="Science">
        <title>The complete genome sequence of Escherichia coli K-12.</title>
        <authorList>
            <person name="Blattner F.R."/>
            <person name="Plunkett G. III"/>
            <person name="Bloch C.A."/>
            <person name="Perna N.T."/>
            <person name="Burland V."/>
            <person name="Riley M."/>
            <person name="Collado-Vides J."/>
            <person name="Glasner J.D."/>
            <person name="Rode C.K."/>
            <person name="Mayhew G.F."/>
            <person name="Gregor J."/>
            <person name="Davis N.W."/>
            <person name="Kirkpatrick H.A."/>
            <person name="Goeden M.A."/>
            <person name="Rose D.J."/>
            <person name="Mau B."/>
            <person name="Shao Y."/>
        </authorList>
    </citation>
    <scope>NUCLEOTIDE SEQUENCE [LARGE SCALE GENOMIC DNA]</scope>
    <source>
        <strain>K12 / MG1655 / ATCC 47076</strain>
    </source>
</reference>
<reference key="3">
    <citation type="journal article" date="2006" name="Mol. Syst. Biol.">
        <title>Highly accurate genome sequences of Escherichia coli K-12 strains MG1655 and W3110.</title>
        <authorList>
            <person name="Hayashi K."/>
            <person name="Morooka N."/>
            <person name="Yamamoto Y."/>
            <person name="Fujita K."/>
            <person name="Isono K."/>
            <person name="Choi S."/>
            <person name="Ohtsubo E."/>
            <person name="Baba T."/>
            <person name="Wanner B.L."/>
            <person name="Mori H."/>
            <person name="Horiuchi T."/>
        </authorList>
    </citation>
    <scope>NUCLEOTIDE SEQUENCE [LARGE SCALE GENOMIC DNA]</scope>
    <source>
        <strain>K12 / W3110 / ATCC 27325 / DSM 5911</strain>
    </source>
</reference>
<reference key="4">
    <citation type="journal article" date="2001" name="Antimicrob. Agents Chemother.">
        <title>Antibiotic susceptibility profiles of Escherichia coli strains lacking multidrug efflux pump genes.</title>
        <authorList>
            <person name="Sulavik M.C."/>
            <person name="Houseweart C."/>
            <person name="Cramer C."/>
            <person name="Jiwani N."/>
            <person name="Murgolo N."/>
            <person name="Greene J."/>
            <person name="DiDomenico B."/>
            <person name="Shaw K.J."/>
            <person name="Miller G.H."/>
            <person name="Hare R."/>
            <person name="Shimer G."/>
        </authorList>
    </citation>
    <scope>PUTATIVE FUNCTION</scope>
</reference>
<reference key="5">
    <citation type="journal article" date="2009" name="J. Bacteriol.">
        <title>Involvement of the leucine response transcription factor LeuO in regulation of the genes for sulfa drug efflux.</title>
        <authorList>
            <person name="Shimada T."/>
            <person name="Yamamoto K."/>
            <person name="Ishihama A."/>
        </authorList>
    </citation>
    <scope>OPERON STRUCTURE</scope>
    <scope>INDUCTION</scope>
    <source>
        <strain>K12 / BW25113</strain>
    </source>
</reference>
<protein>
    <recommendedName>
        <fullName>Multidrug resistance protein MdtN</fullName>
    </recommendedName>
</protein>
<organism>
    <name type="scientific">Escherichia coli (strain K12)</name>
    <dbReference type="NCBI Taxonomy" id="83333"/>
    <lineage>
        <taxon>Bacteria</taxon>
        <taxon>Pseudomonadati</taxon>
        <taxon>Pseudomonadota</taxon>
        <taxon>Gammaproteobacteria</taxon>
        <taxon>Enterobacterales</taxon>
        <taxon>Enterobacteriaceae</taxon>
        <taxon>Escherichia</taxon>
    </lineage>
</organism>
<comment type="function">
    <text>Could be involved in resistance to puromycin, acriflavine and tetraphenylarsonium chloride.</text>
</comment>
<comment type="subunit">
    <text>Could be part of a tripartite efflux system composed of MdtN, MdtO and MdtP.</text>
</comment>
<comment type="subcellular location">
    <subcellularLocation>
        <location evidence="3">Cell inner membrane</location>
        <topology evidence="3">Single-pass type II membrane protein</topology>
    </subcellularLocation>
</comment>
<comment type="induction">
    <text evidence="2">Induced by LeuO, part of the mdtNO operon.</text>
</comment>
<comment type="similarity">
    <text evidence="3">Belongs to the membrane fusion protein (MFP) (TC 8.A.1) family.</text>
</comment>
<feature type="chain" id="PRO_0000201883" description="Multidrug resistance protein MdtN">
    <location>
        <begin position="1"/>
        <end position="343"/>
    </location>
</feature>
<feature type="topological domain" description="Cytoplasmic" evidence="1">
    <location>
        <begin position="1"/>
        <end position="12"/>
    </location>
</feature>
<feature type="transmembrane region" description="Helical; Signal-anchor for type II membrane protein" evidence="1">
    <location>
        <begin position="13"/>
        <end position="33"/>
    </location>
</feature>
<feature type="topological domain" description="Periplasmic" evidence="1">
    <location>
        <begin position="34"/>
        <end position="343"/>
    </location>
</feature>
<dbReference type="EMBL" id="U00006">
    <property type="protein sequence ID" value="AAC43176.1"/>
    <property type="molecule type" value="Genomic_DNA"/>
</dbReference>
<dbReference type="EMBL" id="U00096">
    <property type="protein sequence ID" value="AAD13465.1"/>
    <property type="molecule type" value="Genomic_DNA"/>
</dbReference>
<dbReference type="EMBL" id="AP009048">
    <property type="protein sequence ID" value="BAE78084.1"/>
    <property type="molecule type" value="Genomic_DNA"/>
</dbReference>
<dbReference type="PIR" id="A65217">
    <property type="entry name" value="A65217"/>
</dbReference>
<dbReference type="RefSeq" id="NP_418506.1">
    <property type="nucleotide sequence ID" value="NC_000913.3"/>
</dbReference>
<dbReference type="RefSeq" id="WP_000446378.1">
    <property type="nucleotide sequence ID" value="NZ_SSZK01000016.1"/>
</dbReference>
<dbReference type="SMR" id="P32716"/>
<dbReference type="BioGRID" id="4262953">
    <property type="interactions" value="212"/>
</dbReference>
<dbReference type="ComplexPortal" id="CPX-6021">
    <property type="entry name" value="SdsRQP multidrug transport complex"/>
</dbReference>
<dbReference type="FunCoup" id="P32716">
    <property type="interactions" value="171"/>
</dbReference>
<dbReference type="IntAct" id="P32716">
    <property type="interactions" value="3"/>
</dbReference>
<dbReference type="STRING" id="511145.b4082"/>
<dbReference type="CARD" id="ARO:3003548">
    <property type="molecule name" value="mdtN"/>
    <property type="mechanism identifier" value="ARO:0010000"/>
    <property type="mechanism name" value="antibiotic efflux"/>
</dbReference>
<dbReference type="PaxDb" id="511145-b4082"/>
<dbReference type="EnsemblBacteria" id="AAD13465">
    <property type="protein sequence ID" value="AAD13465"/>
    <property type="gene ID" value="b4082"/>
</dbReference>
<dbReference type="GeneID" id="948598"/>
<dbReference type="KEGG" id="ecj:JW4043"/>
<dbReference type="KEGG" id="eco:b4082"/>
<dbReference type="KEGG" id="ecoc:C3026_22065"/>
<dbReference type="PATRIC" id="fig|1411691.4.peg.2619"/>
<dbReference type="EchoBASE" id="EB1897"/>
<dbReference type="eggNOG" id="COG1566">
    <property type="taxonomic scope" value="Bacteria"/>
</dbReference>
<dbReference type="HOGENOM" id="CLU_018816_15_2_6"/>
<dbReference type="InParanoid" id="P32716"/>
<dbReference type="OMA" id="QRIPMRV"/>
<dbReference type="OrthoDB" id="9811754at2"/>
<dbReference type="PhylomeDB" id="P32716"/>
<dbReference type="BioCyc" id="EcoCyc:EG11954-MONOMER"/>
<dbReference type="BioCyc" id="MetaCyc:EG11954-MONOMER"/>
<dbReference type="PRO" id="PR:P32716"/>
<dbReference type="Proteomes" id="UP000000625">
    <property type="component" value="Chromosome"/>
</dbReference>
<dbReference type="GO" id="GO:0016020">
    <property type="term" value="C:membrane"/>
    <property type="evidence" value="ECO:0000303"/>
    <property type="project" value="ComplexPortal"/>
</dbReference>
<dbReference type="GO" id="GO:0005886">
    <property type="term" value="C:plasma membrane"/>
    <property type="evidence" value="ECO:0007669"/>
    <property type="project" value="UniProtKB-SubCell"/>
</dbReference>
<dbReference type="GO" id="GO:1990351">
    <property type="term" value="C:transporter complex"/>
    <property type="evidence" value="ECO:0000303"/>
    <property type="project" value="ComplexPortal"/>
</dbReference>
<dbReference type="GO" id="GO:0015546">
    <property type="term" value="F:sulfathiazole transmembrane transporter activity"/>
    <property type="evidence" value="ECO:0000315"/>
    <property type="project" value="EcoCyc"/>
</dbReference>
<dbReference type="GO" id="GO:0022857">
    <property type="term" value="F:transmembrane transporter activity"/>
    <property type="evidence" value="ECO:0000318"/>
    <property type="project" value="GO_Central"/>
</dbReference>
<dbReference type="GO" id="GO:0042910">
    <property type="term" value="F:xenobiotic transmembrane transporter activity"/>
    <property type="evidence" value="ECO:0007669"/>
    <property type="project" value="InterPro"/>
</dbReference>
<dbReference type="GO" id="GO:0046677">
    <property type="term" value="P:response to antibiotic"/>
    <property type="evidence" value="ECO:0000315"/>
    <property type="project" value="EcoCyc"/>
</dbReference>
<dbReference type="GO" id="GO:1902599">
    <property type="term" value="P:sulfathiazole transmembrane transport"/>
    <property type="evidence" value="ECO:0000315"/>
    <property type="project" value="EcoCyc"/>
</dbReference>
<dbReference type="GO" id="GO:0055085">
    <property type="term" value="P:transmembrane transport"/>
    <property type="evidence" value="ECO:0000318"/>
    <property type="project" value="GO_Central"/>
</dbReference>
<dbReference type="GO" id="GO:1990961">
    <property type="term" value="P:xenobiotic detoxification by transmembrane export across the plasma membrane"/>
    <property type="evidence" value="ECO:0007669"/>
    <property type="project" value="InterPro"/>
</dbReference>
<dbReference type="FunFam" id="2.40.30.170:FF:000008">
    <property type="entry name" value="Multidrug resistance protein MdtN"/>
    <property type="match status" value="1"/>
</dbReference>
<dbReference type="Gene3D" id="2.40.30.170">
    <property type="match status" value="1"/>
</dbReference>
<dbReference type="Gene3D" id="2.40.50.100">
    <property type="match status" value="1"/>
</dbReference>
<dbReference type="Gene3D" id="1.10.287.470">
    <property type="entry name" value="Helix hairpin bin"/>
    <property type="match status" value="1"/>
</dbReference>
<dbReference type="InterPro" id="IPR043602">
    <property type="entry name" value="CusB-like_dom_1"/>
</dbReference>
<dbReference type="InterPro" id="IPR032317">
    <property type="entry name" value="CusB_D23"/>
</dbReference>
<dbReference type="InterPro" id="IPR050393">
    <property type="entry name" value="MFP_Efflux_Pump"/>
</dbReference>
<dbReference type="InterPro" id="IPR005694">
    <property type="entry name" value="MFP_proteobact"/>
</dbReference>
<dbReference type="NCBIfam" id="TIGR00998">
    <property type="entry name" value="8a0101"/>
    <property type="match status" value="1"/>
</dbReference>
<dbReference type="NCBIfam" id="NF007785">
    <property type="entry name" value="PRK10476.1"/>
    <property type="match status" value="1"/>
</dbReference>
<dbReference type="PANTHER" id="PTHR30367:SF1">
    <property type="entry name" value="MULTIDRUG RESISTANCE PROTEIN MDTN"/>
    <property type="match status" value="1"/>
</dbReference>
<dbReference type="PANTHER" id="PTHR30367">
    <property type="entry name" value="P-HYDROXYBENZOIC ACID EFFLUX PUMP SUBUNIT AAEA-RELATED"/>
    <property type="match status" value="1"/>
</dbReference>
<dbReference type="Pfam" id="PF00529">
    <property type="entry name" value="CusB_dom_1"/>
    <property type="match status" value="1"/>
</dbReference>
<dbReference type="Pfam" id="PF16576">
    <property type="entry name" value="HlyD_D23"/>
    <property type="match status" value="1"/>
</dbReference>
<dbReference type="SUPFAM" id="SSF111369">
    <property type="entry name" value="HlyD-like secretion proteins"/>
    <property type="match status" value="3"/>
</dbReference>
<gene>
    <name type="primary">mdtN</name>
    <name type="synonym">yjcR</name>
    <name type="ordered locus">b4082</name>
    <name type="ordered locus">JW4043</name>
</gene>
<name>MDTN_ECOLI</name>